<feature type="chain" id="PRO_0000082403" description="ATP synthase subunit b, chloroplastic">
    <location>
        <begin position="1"/>
        <end position="184"/>
    </location>
</feature>
<feature type="transmembrane region" description="Helical" evidence="1">
    <location>
        <begin position="27"/>
        <end position="49"/>
    </location>
</feature>
<comment type="function">
    <text evidence="1">F(1)F(0) ATP synthase produces ATP from ADP in the presence of a proton or sodium gradient. F-type ATPases consist of two structural domains, F(1) containing the extramembraneous catalytic core and F(0) containing the membrane proton channel, linked together by a central stalk and a peripheral stalk. During catalysis, ATP synthesis in the catalytic domain of F(1) is coupled via a rotary mechanism of the central stalk subunits to proton translocation.</text>
</comment>
<comment type="function">
    <text evidence="1">Component of the F(0) channel, it forms part of the peripheral stalk, linking F(1) to F(0).</text>
</comment>
<comment type="subunit">
    <text evidence="1">F-type ATPases have 2 components, F(1) - the catalytic core - and F(0) - the membrane proton channel. F(1) has five subunits: alpha(3), beta(3), gamma(1), delta(1), epsilon(1). F(0) has four main subunits: a(1), b(1), b'(1) and c(10-14). The alpha and beta chains form an alternating ring which encloses part of the gamma chain. F(1) is attached to F(0) by a central stalk formed by the gamma and epsilon chains, while a peripheral stalk is formed by the delta, b and b' chains.</text>
</comment>
<comment type="subcellular location">
    <subcellularLocation>
        <location evidence="1">Plastid</location>
        <location evidence="1">Chloroplast thylakoid membrane</location>
        <topology evidence="1">Single-pass membrane protein</topology>
    </subcellularLocation>
</comment>
<comment type="miscellaneous">
    <text>In plastids the F-type ATPase is also known as CF(1)CF(0).</text>
</comment>
<comment type="similarity">
    <text evidence="1">Belongs to the ATPase B chain family.</text>
</comment>
<keyword id="KW-0066">ATP synthesis</keyword>
<keyword id="KW-0067">ATP-binding</keyword>
<keyword id="KW-0138">CF(0)</keyword>
<keyword id="KW-0150">Chloroplast</keyword>
<keyword id="KW-0375">Hydrogen ion transport</keyword>
<keyword id="KW-0406">Ion transport</keyword>
<keyword id="KW-0472">Membrane</keyword>
<keyword id="KW-0547">Nucleotide-binding</keyword>
<keyword id="KW-0934">Plastid</keyword>
<keyword id="KW-1185">Reference proteome</keyword>
<keyword id="KW-0793">Thylakoid</keyword>
<keyword id="KW-0812">Transmembrane</keyword>
<keyword id="KW-1133">Transmembrane helix</keyword>
<keyword id="KW-0813">Transport</keyword>
<gene>
    <name evidence="1" type="primary">atpF</name>
    <name type="ordered locus">AtCg00130</name>
</gene>
<dbReference type="EMBL" id="AP000423">
    <property type="protein sequence ID" value="BAA84371.1"/>
    <property type="molecule type" value="Genomic_DNA"/>
</dbReference>
<dbReference type="RefSeq" id="NP_051045.1">
    <property type="nucleotide sequence ID" value="NC_000932.1"/>
</dbReference>
<dbReference type="SMR" id="P56759"/>
<dbReference type="BioGRID" id="29983">
    <property type="interactions" value="2"/>
</dbReference>
<dbReference type="FunCoup" id="P56759">
    <property type="interactions" value="203"/>
</dbReference>
<dbReference type="STRING" id="3702.P56759"/>
<dbReference type="iPTMnet" id="P56759"/>
<dbReference type="PaxDb" id="3702-ATCG00130.1"/>
<dbReference type="ProteomicsDB" id="241091"/>
<dbReference type="EnsemblPlants" id="ATCG00130.1">
    <property type="protein sequence ID" value="ATCG00130.1"/>
    <property type="gene ID" value="ATCG00130"/>
</dbReference>
<dbReference type="GeneID" id="844789"/>
<dbReference type="Gramene" id="ATCG00130.1">
    <property type="protein sequence ID" value="ATCG00130.1"/>
    <property type="gene ID" value="ATCG00130"/>
</dbReference>
<dbReference type="KEGG" id="ath:ArthCp008"/>
<dbReference type="Araport" id="ATCG00130"/>
<dbReference type="TAIR" id="ATCG00130">
    <property type="gene designation" value="ATPF"/>
</dbReference>
<dbReference type="eggNOG" id="ENOG502S22I">
    <property type="taxonomic scope" value="Eukaryota"/>
</dbReference>
<dbReference type="HOGENOM" id="CLU_079215_8_0_1"/>
<dbReference type="InParanoid" id="P56759"/>
<dbReference type="OMA" id="IRANIGM"/>
<dbReference type="BioCyc" id="ARA:ATCG00130-MONOMER"/>
<dbReference type="PRO" id="PR:P56759"/>
<dbReference type="Proteomes" id="UP000006548">
    <property type="component" value="Chloroplast Pltd"/>
</dbReference>
<dbReference type="ExpressionAtlas" id="P56759">
    <property type="expression patterns" value="baseline and differential"/>
</dbReference>
<dbReference type="GO" id="GO:0009507">
    <property type="term" value="C:chloroplast"/>
    <property type="evidence" value="ECO:0007005"/>
    <property type="project" value="TAIR"/>
</dbReference>
<dbReference type="GO" id="GO:0009534">
    <property type="term" value="C:chloroplast thylakoid"/>
    <property type="evidence" value="ECO:0007005"/>
    <property type="project" value="TAIR"/>
</dbReference>
<dbReference type="GO" id="GO:0009535">
    <property type="term" value="C:chloroplast thylakoid membrane"/>
    <property type="evidence" value="ECO:0007005"/>
    <property type="project" value="TAIR"/>
</dbReference>
<dbReference type="GO" id="GO:0009536">
    <property type="term" value="C:plastid"/>
    <property type="evidence" value="ECO:0007005"/>
    <property type="project" value="TAIR"/>
</dbReference>
<dbReference type="GO" id="GO:0045259">
    <property type="term" value="C:proton-transporting ATP synthase complex"/>
    <property type="evidence" value="ECO:0007669"/>
    <property type="project" value="UniProtKB-KW"/>
</dbReference>
<dbReference type="GO" id="GO:0009579">
    <property type="term" value="C:thylakoid"/>
    <property type="evidence" value="ECO:0007005"/>
    <property type="project" value="TAIR"/>
</dbReference>
<dbReference type="GO" id="GO:0005524">
    <property type="term" value="F:ATP binding"/>
    <property type="evidence" value="ECO:0007669"/>
    <property type="project" value="UniProtKB-KW"/>
</dbReference>
<dbReference type="GO" id="GO:0046933">
    <property type="term" value="F:proton-transporting ATP synthase activity, rotational mechanism"/>
    <property type="evidence" value="ECO:0007669"/>
    <property type="project" value="UniProtKB-UniRule"/>
</dbReference>
<dbReference type="CDD" id="cd06503">
    <property type="entry name" value="ATP-synt_Fo_b"/>
    <property type="match status" value="1"/>
</dbReference>
<dbReference type="HAMAP" id="MF_01398">
    <property type="entry name" value="ATP_synth_b_bprime"/>
    <property type="match status" value="1"/>
</dbReference>
<dbReference type="InterPro" id="IPR002146">
    <property type="entry name" value="ATP_synth_b/b'su_bac/chlpt"/>
</dbReference>
<dbReference type="PANTHER" id="PTHR34264">
    <property type="entry name" value="ATP SYNTHASE SUBUNIT B, CHLOROPLASTIC"/>
    <property type="match status" value="1"/>
</dbReference>
<dbReference type="PANTHER" id="PTHR34264:SF3">
    <property type="entry name" value="ATP SYNTHASE SUBUNIT B, CHLOROPLASTIC"/>
    <property type="match status" value="1"/>
</dbReference>
<dbReference type="Pfam" id="PF00430">
    <property type="entry name" value="ATP-synt_B"/>
    <property type="match status" value="1"/>
</dbReference>
<proteinExistence type="inferred from homology"/>
<reference key="1">
    <citation type="journal article" date="1999" name="DNA Res.">
        <title>Complete structure of the chloroplast genome of Arabidopsis thaliana.</title>
        <authorList>
            <person name="Sato S."/>
            <person name="Nakamura Y."/>
            <person name="Kaneko T."/>
            <person name="Asamizu E."/>
            <person name="Tabata S."/>
        </authorList>
    </citation>
    <scope>NUCLEOTIDE SEQUENCE [LARGE SCALE GENOMIC DNA]</scope>
    <source>
        <strain>cv. Columbia</strain>
    </source>
</reference>
<organism>
    <name type="scientific">Arabidopsis thaliana</name>
    <name type="common">Mouse-ear cress</name>
    <dbReference type="NCBI Taxonomy" id="3702"/>
    <lineage>
        <taxon>Eukaryota</taxon>
        <taxon>Viridiplantae</taxon>
        <taxon>Streptophyta</taxon>
        <taxon>Embryophyta</taxon>
        <taxon>Tracheophyta</taxon>
        <taxon>Spermatophyta</taxon>
        <taxon>Magnoliopsida</taxon>
        <taxon>eudicotyledons</taxon>
        <taxon>Gunneridae</taxon>
        <taxon>Pentapetalae</taxon>
        <taxon>rosids</taxon>
        <taxon>malvids</taxon>
        <taxon>Brassicales</taxon>
        <taxon>Brassicaceae</taxon>
        <taxon>Camelineae</taxon>
        <taxon>Arabidopsis</taxon>
    </lineage>
</organism>
<sequence>MKNLTDSFVYLGHWPSAGSFGFNTDILATNPINLSVVFGVLIFFGKGVLNDLLDNRKQRILNTIRNSEELREGAIQQLENARARLRNVETEADKFRVNGYSEIEREKLNLINSTYKTLKQLENYKNETILFEQQRTINQVRERVFQQALQGAIGTLNSCLSNELHLRTINANIGMFGTMKEITD</sequence>
<geneLocation type="chloroplast"/>
<accession>P56759</accession>
<protein>
    <recommendedName>
        <fullName evidence="1">ATP synthase subunit b, chloroplastic</fullName>
    </recommendedName>
    <alternativeName>
        <fullName evidence="1">ATP synthase F(0) sector subunit b</fullName>
    </alternativeName>
    <alternativeName>
        <fullName evidence="1">ATPase subunit I</fullName>
    </alternativeName>
</protein>
<evidence type="ECO:0000255" key="1">
    <source>
        <dbReference type="HAMAP-Rule" id="MF_01398"/>
    </source>
</evidence>
<name>ATPF_ARATH</name>